<organism>
    <name type="scientific">Xanthomonas campestris pv. campestris (strain B100)</name>
    <dbReference type="NCBI Taxonomy" id="509169"/>
    <lineage>
        <taxon>Bacteria</taxon>
        <taxon>Pseudomonadati</taxon>
        <taxon>Pseudomonadota</taxon>
        <taxon>Gammaproteobacteria</taxon>
        <taxon>Lysobacterales</taxon>
        <taxon>Lysobacteraceae</taxon>
        <taxon>Xanthomonas</taxon>
    </lineage>
</organism>
<dbReference type="EMBL" id="AM920689">
    <property type="protein sequence ID" value="CAP50627.1"/>
    <property type="molecule type" value="Genomic_DNA"/>
</dbReference>
<dbReference type="SMR" id="B0RQ92"/>
<dbReference type="KEGG" id="xca:xcc-b100_1277"/>
<dbReference type="HOGENOM" id="CLU_097408_2_0_6"/>
<dbReference type="Proteomes" id="UP000001188">
    <property type="component" value="Chromosome"/>
</dbReference>
<dbReference type="GO" id="GO:0005829">
    <property type="term" value="C:cytosol"/>
    <property type="evidence" value="ECO:0007669"/>
    <property type="project" value="TreeGrafter"/>
</dbReference>
<dbReference type="GO" id="GO:0005960">
    <property type="term" value="C:glycine cleavage complex"/>
    <property type="evidence" value="ECO:0007669"/>
    <property type="project" value="InterPro"/>
</dbReference>
<dbReference type="GO" id="GO:0019464">
    <property type="term" value="P:glycine decarboxylation via glycine cleavage system"/>
    <property type="evidence" value="ECO:0007669"/>
    <property type="project" value="UniProtKB-UniRule"/>
</dbReference>
<dbReference type="CDD" id="cd06848">
    <property type="entry name" value="GCS_H"/>
    <property type="match status" value="1"/>
</dbReference>
<dbReference type="Gene3D" id="2.40.50.100">
    <property type="match status" value="1"/>
</dbReference>
<dbReference type="HAMAP" id="MF_00272">
    <property type="entry name" value="GcvH"/>
    <property type="match status" value="1"/>
</dbReference>
<dbReference type="InterPro" id="IPR003016">
    <property type="entry name" value="2-oxoA_DH_lipoyl-BS"/>
</dbReference>
<dbReference type="InterPro" id="IPR000089">
    <property type="entry name" value="Biotin_lipoyl"/>
</dbReference>
<dbReference type="InterPro" id="IPR002930">
    <property type="entry name" value="GCV_H"/>
</dbReference>
<dbReference type="InterPro" id="IPR033753">
    <property type="entry name" value="GCV_H/Fam206"/>
</dbReference>
<dbReference type="InterPro" id="IPR017453">
    <property type="entry name" value="GCV_H_sub"/>
</dbReference>
<dbReference type="InterPro" id="IPR011053">
    <property type="entry name" value="Single_hybrid_motif"/>
</dbReference>
<dbReference type="NCBIfam" id="TIGR00527">
    <property type="entry name" value="gcvH"/>
    <property type="match status" value="1"/>
</dbReference>
<dbReference type="NCBIfam" id="NF002270">
    <property type="entry name" value="PRK01202.1"/>
    <property type="match status" value="1"/>
</dbReference>
<dbReference type="PANTHER" id="PTHR11715">
    <property type="entry name" value="GLYCINE CLEAVAGE SYSTEM H PROTEIN"/>
    <property type="match status" value="1"/>
</dbReference>
<dbReference type="PANTHER" id="PTHR11715:SF3">
    <property type="entry name" value="GLYCINE CLEAVAGE SYSTEM H PROTEIN-RELATED"/>
    <property type="match status" value="1"/>
</dbReference>
<dbReference type="Pfam" id="PF01597">
    <property type="entry name" value="GCV_H"/>
    <property type="match status" value="1"/>
</dbReference>
<dbReference type="SUPFAM" id="SSF51230">
    <property type="entry name" value="Single hybrid motif"/>
    <property type="match status" value="1"/>
</dbReference>
<dbReference type="PROSITE" id="PS50968">
    <property type="entry name" value="BIOTINYL_LIPOYL"/>
    <property type="match status" value="1"/>
</dbReference>
<dbReference type="PROSITE" id="PS00189">
    <property type="entry name" value="LIPOYL"/>
    <property type="match status" value="1"/>
</dbReference>
<reference key="1">
    <citation type="journal article" date="2008" name="J. Biotechnol.">
        <title>The genome of Xanthomonas campestris pv. campestris B100 and its use for the reconstruction of metabolic pathways involved in xanthan biosynthesis.</title>
        <authorList>
            <person name="Vorhoelter F.-J."/>
            <person name="Schneiker S."/>
            <person name="Goesmann A."/>
            <person name="Krause L."/>
            <person name="Bekel T."/>
            <person name="Kaiser O."/>
            <person name="Linke B."/>
            <person name="Patschkowski T."/>
            <person name="Rueckert C."/>
            <person name="Schmid J."/>
            <person name="Sidhu V.K."/>
            <person name="Sieber V."/>
            <person name="Tauch A."/>
            <person name="Watt S.A."/>
            <person name="Weisshaar B."/>
            <person name="Becker A."/>
            <person name="Niehaus K."/>
            <person name="Puehler A."/>
        </authorList>
    </citation>
    <scope>NUCLEOTIDE SEQUENCE [LARGE SCALE GENOMIC DNA]</scope>
    <source>
        <strain>B100</strain>
    </source>
</reference>
<proteinExistence type="inferred from homology"/>
<sequence>MSEIPGDLKFLKSHEWARVEGNGRVTVGISDHAQGLLGDLVYVELPAVGDTVQAGNGAAVVESVKAASDVYSPVTGTVVEVNASLSDKPETINEDAYGEGWIFVVEIDDKEQLNELLAPDDYAELLEDDAH</sequence>
<name>GCSH_XANCB</name>
<protein>
    <recommendedName>
        <fullName evidence="1">Glycine cleavage system H protein</fullName>
    </recommendedName>
</protein>
<evidence type="ECO:0000255" key="1">
    <source>
        <dbReference type="HAMAP-Rule" id="MF_00272"/>
    </source>
</evidence>
<evidence type="ECO:0000255" key="2">
    <source>
        <dbReference type="PROSITE-ProRule" id="PRU01066"/>
    </source>
</evidence>
<keyword id="KW-0450">Lipoyl</keyword>
<gene>
    <name evidence="1" type="primary">gcvH</name>
    <name type="ordered locus">xcc-b100_1277</name>
</gene>
<accession>B0RQ92</accession>
<comment type="function">
    <text evidence="1">The glycine cleavage system catalyzes the degradation of glycine. The H protein shuttles the methylamine group of glycine from the P protein to the T protein.</text>
</comment>
<comment type="cofactor">
    <cofactor evidence="1">
        <name>(R)-lipoate</name>
        <dbReference type="ChEBI" id="CHEBI:83088"/>
    </cofactor>
    <text evidence="1">Binds 1 lipoyl cofactor covalently.</text>
</comment>
<comment type="subunit">
    <text evidence="1">The glycine cleavage system is composed of four proteins: P, T, L and H.</text>
</comment>
<comment type="similarity">
    <text evidence="1">Belongs to the GcvH family.</text>
</comment>
<feature type="chain" id="PRO_1000114560" description="Glycine cleavage system H protein">
    <location>
        <begin position="1"/>
        <end position="131"/>
    </location>
</feature>
<feature type="domain" description="Lipoyl-binding" evidence="2">
    <location>
        <begin position="24"/>
        <end position="106"/>
    </location>
</feature>
<feature type="modified residue" description="N6-lipoyllysine" evidence="1">
    <location>
        <position position="65"/>
    </location>
</feature>